<proteinExistence type="inferred from homology"/>
<sequence>MIILGIDPALGSLGWAVVAKENAQLKYLASGIIRTNSKDAIHHRLAFINSTLEKVILEYQPNMAAIEETFVNTNSVTSLKLGYARGAIMSLIGRYNLDMREFKPNTVKKTVTGYGHAEKDQMLHMIKLLLSGTALITNSDEADAVAIAYTCLVTKNY</sequence>
<organism>
    <name type="scientific">Rickettsia africae (strain ESF-5)</name>
    <dbReference type="NCBI Taxonomy" id="347255"/>
    <lineage>
        <taxon>Bacteria</taxon>
        <taxon>Pseudomonadati</taxon>
        <taxon>Pseudomonadota</taxon>
        <taxon>Alphaproteobacteria</taxon>
        <taxon>Rickettsiales</taxon>
        <taxon>Rickettsiaceae</taxon>
        <taxon>Rickettsieae</taxon>
        <taxon>Rickettsia</taxon>
        <taxon>spotted fever group</taxon>
    </lineage>
</organism>
<comment type="function">
    <text evidence="1">The RuvA-RuvB-RuvC complex processes Holliday junction (HJ) DNA during genetic recombination and DNA repair. Endonuclease that resolves HJ intermediates. Cleaves cruciform DNA by making single-stranded nicks across the HJ at symmetrical positions within the homologous arms, yielding a 5'-phosphate and a 3'-hydroxyl group; requires a central core of homology in the junction. The consensus cleavage sequence is 5'-(A/T)TT(C/G)-3'. Cleavage occurs on the 3'-side of the TT dinucleotide at the point of strand exchange. HJ branch migration catalyzed by RuvA-RuvB allows RuvC to scan DNA until it finds its consensus sequence, where it cleaves and resolves the cruciform DNA.</text>
</comment>
<comment type="catalytic activity">
    <reaction evidence="1">
        <text>Endonucleolytic cleavage at a junction such as a reciprocal single-stranded crossover between two homologous DNA duplexes (Holliday junction).</text>
        <dbReference type="EC" id="3.1.21.10"/>
    </reaction>
</comment>
<comment type="cofactor">
    <cofactor evidence="1">
        <name>Mg(2+)</name>
        <dbReference type="ChEBI" id="CHEBI:18420"/>
    </cofactor>
    <text evidence="1">Binds 2 Mg(2+) ion per subunit.</text>
</comment>
<comment type="subunit">
    <text evidence="1">Homodimer which binds Holliday junction (HJ) DNA. The HJ becomes 2-fold symmetrical on binding to RuvC with unstacked arms; it has a different conformation from HJ DNA in complex with RuvA. In the full resolvosome a probable DNA-RuvA(4)-RuvB(12)-RuvC(2) complex forms which resolves the HJ.</text>
</comment>
<comment type="subcellular location">
    <subcellularLocation>
        <location evidence="1">Cytoplasm</location>
    </subcellularLocation>
</comment>
<comment type="similarity">
    <text evidence="1">Belongs to the RuvC family.</text>
</comment>
<name>RUVC_RICAE</name>
<feature type="chain" id="PRO_1000202041" description="Crossover junction endodeoxyribonuclease RuvC">
    <location>
        <begin position="1"/>
        <end position="157"/>
    </location>
</feature>
<feature type="active site" evidence="1">
    <location>
        <position position="7"/>
    </location>
</feature>
<feature type="active site" evidence="1">
    <location>
        <position position="67"/>
    </location>
</feature>
<feature type="active site" evidence="1">
    <location>
        <position position="140"/>
    </location>
</feature>
<feature type="binding site" evidence="1">
    <location>
        <position position="7"/>
    </location>
    <ligand>
        <name>Mg(2+)</name>
        <dbReference type="ChEBI" id="CHEBI:18420"/>
        <label>1</label>
    </ligand>
</feature>
<feature type="binding site" evidence="1">
    <location>
        <position position="67"/>
    </location>
    <ligand>
        <name>Mg(2+)</name>
        <dbReference type="ChEBI" id="CHEBI:18420"/>
        <label>2</label>
    </ligand>
</feature>
<feature type="binding site" evidence="1">
    <location>
        <position position="140"/>
    </location>
    <ligand>
        <name>Mg(2+)</name>
        <dbReference type="ChEBI" id="CHEBI:18420"/>
        <label>1</label>
    </ligand>
</feature>
<gene>
    <name evidence="1" type="primary">ruvC</name>
    <name type="ordered locus">RAF_ORF0148</name>
</gene>
<accession>C3PMF5</accession>
<dbReference type="EC" id="3.1.21.10" evidence="1"/>
<dbReference type="EMBL" id="CP001612">
    <property type="protein sequence ID" value="ACP53115.1"/>
    <property type="molecule type" value="Genomic_DNA"/>
</dbReference>
<dbReference type="RefSeq" id="WP_012719398.1">
    <property type="nucleotide sequence ID" value="NC_012633.1"/>
</dbReference>
<dbReference type="SMR" id="C3PMF5"/>
<dbReference type="KEGG" id="raf:RAF_ORF0148"/>
<dbReference type="HOGENOM" id="CLU_091257_1_0_5"/>
<dbReference type="Proteomes" id="UP000002305">
    <property type="component" value="Chromosome"/>
</dbReference>
<dbReference type="GO" id="GO:0005737">
    <property type="term" value="C:cytoplasm"/>
    <property type="evidence" value="ECO:0007669"/>
    <property type="project" value="UniProtKB-SubCell"/>
</dbReference>
<dbReference type="GO" id="GO:0048476">
    <property type="term" value="C:Holliday junction resolvase complex"/>
    <property type="evidence" value="ECO:0007669"/>
    <property type="project" value="UniProtKB-UniRule"/>
</dbReference>
<dbReference type="GO" id="GO:0008821">
    <property type="term" value="F:crossover junction DNA endonuclease activity"/>
    <property type="evidence" value="ECO:0007669"/>
    <property type="project" value="UniProtKB-UniRule"/>
</dbReference>
<dbReference type="GO" id="GO:0003677">
    <property type="term" value="F:DNA binding"/>
    <property type="evidence" value="ECO:0007669"/>
    <property type="project" value="UniProtKB-KW"/>
</dbReference>
<dbReference type="GO" id="GO:0000287">
    <property type="term" value="F:magnesium ion binding"/>
    <property type="evidence" value="ECO:0007669"/>
    <property type="project" value="UniProtKB-UniRule"/>
</dbReference>
<dbReference type="GO" id="GO:0006310">
    <property type="term" value="P:DNA recombination"/>
    <property type="evidence" value="ECO:0007669"/>
    <property type="project" value="UniProtKB-UniRule"/>
</dbReference>
<dbReference type="GO" id="GO:0006281">
    <property type="term" value="P:DNA repair"/>
    <property type="evidence" value="ECO:0007669"/>
    <property type="project" value="UniProtKB-UniRule"/>
</dbReference>
<dbReference type="CDD" id="cd16962">
    <property type="entry name" value="RuvC"/>
    <property type="match status" value="1"/>
</dbReference>
<dbReference type="FunFam" id="3.30.420.10:FF:000002">
    <property type="entry name" value="Crossover junction endodeoxyribonuclease RuvC"/>
    <property type="match status" value="1"/>
</dbReference>
<dbReference type="Gene3D" id="3.30.420.10">
    <property type="entry name" value="Ribonuclease H-like superfamily/Ribonuclease H"/>
    <property type="match status" value="1"/>
</dbReference>
<dbReference type="HAMAP" id="MF_00034">
    <property type="entry name" value="RuvC"/>
    <property type="match status" value="1"/>
</dbReference>
<dbReference type="InterPro" id="IPR012337">
    <property type="entry name" value="RNaseH-like_sf"/>
</dbReference>
<dbReference type="InterPro" id="IPR036397">
    <property type="entry name" value="RNaseH_sf"/>
</dbReference>
<dbReference type="InterPro" id="IPR020563">
    <property type="entry name" value="X-over_junc_endoDNase_Mg_BS"/>
</dbReference>
<dbReference type="InterPro" id="IPR002176">
    <property type="entry name" value="X-over_junc_endoDNase_RuvC"/>
</dbReference>
<dbReference type="NCBIfam" id="TIGR00228">
    <property type="entry name" value="ruvC"/>
    <property type="match status" value="1"/>
</dbReference>
<dbReference type="PANTHER" id="PTHR30194">
    <property type="entry name" value="CROSSOVER JUNCTION ENDODEOXYRIBONUCLEASE RUVC"/>
    <property type="match status" value="1"/>
</dbReference>
<dbReference type="PANTHER" id="PTHR30194:SF3">
    <property type="entry name" value="CROSSOVER JUNCTION ENDODEOXYRIBONUCLEASE RUVC"/>
    <property type="match status" value="1"/>
</dbReference>
<dbReference type="Pfam" id="PF02075">
    <property type="entry name" value="RuvC"/>
    <property type="match status" value="1"/>
</dbReference>
<dbReference type="PRINTS" id="PR00696">
    <property type="entry name" value="RSOLVASERUVC"/>
</dbReference>
<dbReference type="SUPFAM" id="SSF53098">
    <property type="entry name" value="Ribonuclease H-like"/>
    <property type="match status" value="1"/>
</dbReference>
<dbReference type="PROSITE" id="PS01321">
    <property type="entry name" value="RUVC"/>
    <property type="match status" value="1"/>
</dbReference>
<reference key="1">
    <citation type="journal article" date="2009" name="BMC Genomics">
        <title>Analysis of the Rickettsia africae genome reveals that virulence acquisition in Rickettsia species may be explained by genome reduction.</title>
        <authorList>
            <person name="Fournier P.-E."/>
            <person name="El Karkouri K."/>
            <person name="Leroy Q."/>
            <person name="Robert C."/>
            <person name="Giumelli B."/>
            <person name="Renesto P."/>
            <person name="Socolovschi C."/>
            <person name="Parola P."/>
            <person name="Audic S."/>
            <person name="Raoult D."/>
        </authorList>
    </citation>
    <scope>NUCLEOTIDE SEQUENCE [LARGE SCALE GENOMIC DNA]</scope>
    <source>
        <strain>ESF-5</strain>
    </source>
</reference>
<evidence type="ECO:0000255" key="1">
    <source>
        <dbReference type="HAMAP-Rule" id="MF_00034"/>
    </source>
</evidence>
<keyword id="KW-0963">Cytoplasm</keyword>
<keyword id="KW-0227">DNA damage</keyword>
<keyword id="KW-0233">DNA recombination</keyword>
<keyword id="KW-0234">DNA repair</keyword>
<keyword id="KW-0238">DNA-binding</keyword>
<keyword id="KW-0255">Endonuclease</keyword>
<keyword id="KW-0378">Hydrolase</keyword>
<keyword id="KW-0460">Magnesium</keyword>
<keyword id="KW-0479">Metal-binding</keyword>
<keyword id="KW-0540">Nuclease</keyword>
<protein>
    <recommendedName>
        <fullName evidence="1">Crossover junction endodeoxyribonuclease RuvC</fullName>
        <ecNumber evidence="1">3.1.21.10</ecNumber>
    </recommendedName>
    <alternativeName>
        <fullName evidence="1">Holliday junction nuclease RuvC</fullName>
    </alternativeName>
    <alternativeName>
        <fullName evidence="1">Holliday junction resolvase RuvC</fullName>
    </alternativeName>
</protein>